<gene>
    <name type="primary">flgA</name>
    <name type="ordered locus">STM1173</name>
</gene>
<evidence type="ECO:0000255" key="1"/>
<evidence type="ECO:0000305" key="2"/>
<evidence type="ECO:0007829" key="3">
    <source>
        <dbReference type="PDB" id="3TEE"/>
    </source>
</evidence>
<sequence length="219" mass="23556">MQTLKRGFAVAALLFSPLTMAQDINAQLTTWFSQRLAGFSDEVVVTLRSSPNLLPSCEQPAFSMTGSAKLWGNVNVVARCANEKRYLQVNVQATGNYVAVAAPIARGGKLTPANVTLKRGRLDQLPPRTVLDIRQIQDAVSLRDLAPGQPVQLTMIRQAWRVKAGQRVQVIANGEGFSVNAEGQAMNNAAVAQNARVRMTSGQIVSGTVDSDGNILINL</sequence>
<reference key="1">
    <citation type="journal article" date="1994" name="Gene">
        <title>Sequence analysis of the flgA gene and its adjacent region in Salmonella typhimurium, and identification of another flagellar gene, flgN.</title>
        <authorList>
            <person name="Kutsukake K."/>
            <person name="Okada T."/>
            <person name="Yokoseki T."/>
            <person name="Iino T."/>
        </authorList>
    </citation>
    <scope>NUCLEOTIDE SEQUENCE [GENOMIC DNA]</scope>
    <source>
        <strain>LT2</strain>
    </source>
</reference>
<reference key="2">
    <citation type="journal article" date="2001" name="Nature">
        <title>Complete genome sequence of Salmonella enterica serovar Typhimurium LT2.</title>
        <authorList>
            <person name="McClelland M."/>
            <person name="Sanderson K.E."/>
            <person name="Spieth J."/>
            <person name="Clifton S.W."/>
            <person name="Latreille P."/>
            <person name="Courtney L."/>
            <person name="Porwollik S."/>
            <person name="Ali J."/>
            <person name="Dante M."/>
            <person name="Du F."/>
            <person name="Hou S."/>
            <person name="Layman D."/>
            <person name="Leonard S."/>
            <person name="Nguyen C."/>
            <person name="Scott K."/>
            <person name="Holmes A."/>
            <person name="Grewal N."/>
            <person name="Mulvaney E."/>
            <person name="Ryan E."/>
            <person name="Sun H."/>
            <person name="Florea L."/>
            <person name="Miller W."/>
            <person name="Stoneking T."/>
            <person name="Nhan M."/>
            <person name="Waterston R."/>
            <person name="Wilson R.K."/>
        </authorList>
    </citation>
    <scope>NUCLEOTIDE SEQUENCE [LARGE SCALE GENOMIC DNA]</scope>
    <source>
        <strain>LT2 / SGSC1412 / ATCC 700720</strain>
    </source>
</reference>
<comment type="function">
    <text>Involved in the assembly process of the P-ring formation. It may associate with FlgF on the rod constituting a structure essential for the P-ring assembly or may act as a modulator protein for the P-ring assembly.</text>
</comment>
<comment type="subcellular location">
    <subcellularLocation>
        <location evidence="2">Periplasm</location>
    </subcellularLocation>
</comment>
<comment type="similarity">
    <text evidence="2">Belongs to the FlgA family.</text>
</comment>
<organism>
    <name type="scientific">Salmonella typhimurium (strain LT2 / SGSC1412 / ATCC 700720)</name>
    <dbReference type="NCBI Taxonomy" id="99287"/>
    <lineage>
        <taxon>Bacteria</taxon>
        <taxon>Pseudomonadati</taxon>
        <taxon>Pseudomonadota</taxon>
        <taxon>Gammaproteobacteria</taxon>
        <taxon>Enterobacterales</taxon>
        <taxon>Enterobacteriaceae</taxon>
        <taxon>Salmonella</taxon>
    </lineage>
</organism>
<accession>P40131</accession>
<protein>
    <recommendedName>
        <fullName>Flagella basal body P-ring formation protein FlgA</fullName>
    </recommendedName>
</protein>
<feature type="signal peptide" description="Or 26" evidence="1">
    <location>
        <begin position="1"/>
        <end position="21"/>
    </location>
</feature>
<feature type="chain" id="PRO_0000009342" description="Flagella basal body P-ring formation protein FlgA">
    <location>
        <begin position="22"/>
        <end position="219"/>
    </location>
</feature>
<feature type="helix" evidence="3">
    <location>
        <begin position="23"/>
        <end position="35"/>
    </location>
</feature>
<feature type="turn" evidence="3">
    <location>
        <begin position="36"/>
        <end position="39"/>
    </location>
</feature>
<feature type="strand" evidence="3">
    <location>
        <begin position="41"/>
        <end position="47"/>
    </location>
</feature>
<feature type="helix" evidence="3">
    <location>
        <begin position="51"/>
        <end position="53"/>
    </location>
</feature>
<feature type="strand" evidence="3">
    <location>
        <begin position="57"/>
        <end position="59"/>
    </location>
</feature>
<feature type="strand" evidence="3">
    <location>
        <begin position="61"/>
        <end position="63"/>
    </location>
</feature>
<feature type="strand" evidence="3">
    <location>
        <begin position="71"/>
        <end position="80"/>
    </location>
</feature>
<feature type="strand" evidence="3">
    <location>
        <begin position="83"/>
        <end position="100"/>
    </location>
</feature>
<feature type="turn" evidence="3">
    <location>
        <begin position="112"/>
        <end position="114"/>
    </location>
</feature>
<feature type="strand" evidence="3">
    <location>
        <begin position="115"/>
        <end position="121"/>
    </location>
</feature>
<feature type="helix" evidence="3">
    <location>
        <begin position="122"/>
        <end position="124"/>
    </location>
</feature>
<feature type="helix" evidence="3">
    <location>
        <begin position="133"/>
        <end position="136"/>
    </location>
</feature>
<feature type="strand" evidence="3">
    <location>
        <begin position="139"/>
        <end position="143"/>
    </location>
</feature>
<feature type="helix" evidence="3">
    <location>
        <begin position="153"/>
        <end position="155"/>
    </location>
</feature>
<feature type="strand" evidence="3">
    <location>
        <begin position="156"/>
        <end position="158"/>
    </location>
</feature>
<feature type="strand" evidence="3">
    <location>
        <begin position="167"/>
        <end position="173"/>
    </location>
</feature>
<feature type="strand" evidence="3">
    <location>
        <begin position="178"/>
        <end position="185"/>
    </location>
</feature>
<feature type="strand" evidence="3">
    <location>
        <begin position="193"/>
        <end position="199"/>
    </location>
</feature>
<feature type="strand" evidence="3">
    <location>
        <begin position="204"/>
        <end position="209"/>
    </location>
</feature>
<feature type="strand" evidence="3">
    <location>
        <begin position="215"/>
        <end position="218"/>
    </location>
</feature>
<keyword id="KW-0002">3D-structure</keyword>
<keyword id="KW-1005">Bacterial flagellum biogenesis</keyword>
<keyword id="KW-0574">Periplasm</keyword>
<keyword id="KW-1185">Reference proteome</keyword>
<keyword id="KW-0732">Signal</keyword>
<dbReference type="EMBL" id="D25292">
    <property type="protein sequence ID" value="BAA04977.1"/>
    <property type="molecule type" value="Genomic_DNA"/>
</dbReference>
<dbReference type="EMBL" id="AE006468">
    <property type="protein sequence ID" value="AAL20103.1"/>
    <property type="molecule type" value="Genomic_DNA"/>
</dbReference>
<dbReference type="RefSeq" id="NP_460144.1">
    <property type="nucleotide sequence ID" value="NC_003197.2"/>
</dbReference>
<dbReference type="RefSeq" id="WP_001194082.1">
    <property type="nucleotide sequence ID" value="NC_003197.2"/>
</dbReference>
<dbReference type="PDB" id="3TEE">
    <property type="method" value="X-ray"/>
    <property type="resolution" value="1.95 A"/>
    <property type="chains" value="A=22-219"/>
</dbReference>
<dbReference type="PDB" id="3VJP">
    <property type="method" value="X-ray"/>
    <property type="resolution" value="2.70 A"/>
    <property type="chains" value="A/B=22-219"/>
</dbReference>
<dbReference type="PDB" id="3VKI">
    <property type="method" value="X-ray"/>
    <property type="resolution" value="2.30 A"/>
    <property type="chains" value="A/B/C/D=22-219"/>
</dbReference>
<dbReference type="PDBsum" id="3TEE"/>
<dbReference type="PDBsum" id="3VJP"/>
<dbReference type="PDBsum" id="3VKI"/>
<dbReference type="SMR" id="P40131"/>
<dbReference type="STRING" id="99287.STM1173"/>
<dbReference type="PaxDb" id="99287-STM1173"/>
<dbReference type="DNASU" id="1252691"/>
<dbReference type="GeneID" id="1252691"/>
<dbReference type="KEGG" id="stm:STM1173"/>
<dbReference type="PATRIC" id="fig|99287.12.peg.1241"/>
<dbReference type="HOGENOM" id="CLU_070510_2_0_6"/>
<dbReference type="OMA" id="RYEIQVN"/>
<dbReference type="PhylomeDB" id="P40131"/>
<dbReference type="BioCyc" id="SENT99287:STM1173-MONOMER"/>
<dbReference type="EvolutionaryTrace" id="P40131"/>
<dbReference type="Proteomes" id="UP000001014">
    <property type="component" value="Chromosome"/>
</dbReference>
<dbReference type="GO" id="GO:0042597">
    <property type="term" value="C:periplasmic space"/>
    <property type="evidence" value="ECO:0007669"/>
    <property type="project" value="UniProtKB-SubCell"/>
</dbReference>
<dbReference type="GO" id="GO:0044780">
    <property type="term" value="P:bacterial-type flagellum assembly"/>
    <property type="evidence" value="ECO:0007669"/>
    <property type="project" value="InterPro"/>
</dbReference>
<dbReference type="GO" id="GO:0071973">
    <property type="term" value="P:bacterial-type flagellum-dependent cell motility"/>
    <property type="evidence" value="ECO:0000318"/>
    <property type="project" value="GO_Central"/>
</dbReference>
<dbReference type="CDD" id="cd11614">
    <property type="entry name" value="SAF_CpaB_FlgA_like"/>
    <property type="match status" value="1"/>
</dbReference>
<dbReference type="Gene3D" id="2.30.30.760">
    <property type="match status" value="1"/>
</dbReference>
<dbReference type="Gene3D" id="3.90.1210.10">
    <property type="entry name" value="Antifreeze-like/N-acetylneuraminic acid synthase C-terminal domain"/>
    <property type="match status" value="1"/>
</dbReference>
<dbReference type="InterPro" id="IPR017585">
    <property type="entry name" value="Flag_basal_body_FlgA_C"/>
</dbReference>
<dbReference type="InterPro" id="IPR039246">
    <property type="entry name" value="Flagellar_FlgA"/>
</dbReference>
<dbReference type="InterPro" id="IPR013974">
    <property type="entry name" value="SAF"/>
</dbReference>
<dbReference type="NCBIfam" id="TIGR03170">
    <property type="entry name" value="flgA_cterm"/>
    <property type="match status" value="1"/>
</dbReference>
<dbReference type="PANTHER" id="PTHR36307">
    <property type="entry name" value="FLAGELLA BASAL BODY P-RING FORMATION PROTEIN FLGA"/>
    <property type="match status" value="1"/>
</dbReference>
<dbReference type="PANTHER" id="PTHR36307:SF1">
    <property type="entry name" value="FLAGELLA BASAL BODY P-RING FORMATION PROTEIN FLGA"/>
    <property type="match status" value="1"/>
</dbReference>
<dbReference type="Pfam" id="PF13144">
    <property type="entry name" value="ChapFlgA"/>
    <property type="match status" value="1"/>
</dbReference>
<dbReference type="SMART" id="SM00858">
    <property type="entry name" value="SAF"/>
    <property type="match status" value="1"/>
</dbReference>
<name>FLGA_SALTY</name>
<proteinExistence type="evidence at protein level"/>